<feature type="chain" id="PRO_0000340457" description="Urease accessory protein UreD">
    <location>
        <begin position="1"/>
        <end position="296"/>
    </location>
</feature>
<name>URED_JANMA</name>
<dbReference type="EMBL" id="CP000269">
    <property type="protein sequence ID" value="ABR89778.1"/>
    <property type="molecule type" value="Genomic_DNA"/>
</dbReference>
<dbReference type="RefSeq" id="WP_012079664.1">
    <property type="nucleotide sequence ID" value="NC_009659.1"/>
</dbReference>
<dbReference type="SMR" id="A6SZ04"/>
<dbReference type="STRING" id="375286.mma_1811"/>
<dbReference type="KEGG" id="mms:mma_1811"/>
<dbReference type="eggNOG" id="COG0829">
    <property type="taxonomic scope" value="Bacteria"/>
</dbReference>
<dbReference type="HOGENOM" id="CLU_056339_0_0_4"/>
<dbReference type="OrthoDB" id="9798842at2"/>
<dbReference type="Proteomes" id="UP000006388">
    <property type="component" value="Chromosome"/>
</dbReference>
<dbReference type="GO" id="GO:0005737">
    <property type="term" value="C:cytoplasm"/>
    <property type="evidence" value="ECO:0007669"/>
    <property type="project" value="UniProtKB-SubCell"/>
</dbReference>
<dbReference type="GO" id="GO:0016151">
    <property type="term" value="F:nickel cation binding"/>
    <property type="evidence" value="ECO:0007669"/>
    <property type="project" value="UniProtKB-UniRule"/>
</dbReference>
<dbReference type="HAMAP" id="MF_01384">
    <property type="entry name" value="UreD"/>
    <property type="match status" value="1"/>
</dbReference>
<dbReference type="InterPro" id="IPR002669">
    <property type="entry name" value="UreD"/>
</dbReference>
<dbReference type="PANTHER" id="PTHR33643">
    <property type="entry name" value="UREASE ACCESSORY PROTEIN D"/>
    <property type="match status" value="1"/>
</dbReference>
<dbReference type="PANTHER" id="PTHR33643:SF1">
    <property type="entry name" value="UREASE ACCESSORY PROTEIN D"/>
    <property type="match status" value="1"/>
</dbReference>
<dbReference type="Pfam" id="PF01774">
    <property type="entry name" value="UreD"/>
    <property type="match status" value="1"/>
</dbReference>
<reference key="1">
    <citation type="journal article" date="2007" name="PLoS Genet.">
        <title>Genome analysis of Minibacterium massiliensis highlights the convergent evolution of water-living bacteria.</title>
        <authorList>
            <person name="Audic S."/>
            <person name="Robert C."/>
            <person name="Campagna B."/>
            <person name="Parinello H."/>
            <person name="Claverie J.-M."/>
            <person name="Raoult D."/>
            <person name="Drancourt M."/>
        </authorList>
    </citation>
    <scope>NUCLEOTIDE SEQUENCE [LARGE SCALE GENOMIC DNA]</scope>
    <source>
        <strain>Marseille</strain>
    </source>
</reference>
<organism>
    <name type="scientific">Janthinobacterium sp. (strain Marseille)</name>
    <name type="common">Minibacterium massiliensis</name>
    <dbReference type="NCBI Taxonomy" id="375286"/>
    <lineage>
        <taxon>Bacteria</taxon>
        <taxon>Pseudomonadati</taxon>
        <taxon>Pseudomonadota</taxon>
        <taxon>Betaproteobacteria</taxon>
        <taxon>Burkholderiales</taxon>
        <taxon>Oxalobacteraceae</taxon>
        <taxon>Janthinobacterium</taxon>
    </lineage>
</organism>
<gene>
    <name evidence="1" type="primary">ureD</name>
    <name type="ordered locus">mma_1811</name>
</gene>
<proteinExistence type="inferred from homology"/>
<sequence length="296" mass="32386">MKRLSDTSSAITHTNKSGIASFRNDQARLSLAFTDDAGTTRMTERSHFGPLRVQKTLYPEHPAVCHAIIVHPPGGIVGGDQLTITARVGDRAHALLTTPGAGKWYRANGQLSQQQVSLEVGADAALEWLPQETIFFNEADVRLEHNVTLAADARYIGGEILCFGRTASGETFDSGRVAQRTSIRRGGKLLWFEQGALQARSTSMHSPLSLAGYTVCATLIAVGKTMNGAFLNELREESSALAQGGRSGATQMKQVLVARYLGHSSETARLWMTRAWQRIRPELMQRDAVIPRIWNT</sequence>
<accession>A6SZ04</accession>
<keyword id="KW-0143">Chaperone</keyword>
<keyword id="KW-0963">Cytoplasm</keyword>
<keyword id="KW-0996">Nickel insertion</keyword>
<protein>
    <recommendedName>
        <fullName evidence="1">Urease accessory protein UreD</fullName>
    </recommendedName>
</protein>
<evidence type="ECO:0000255" key="1">
    <source>
        <dbReference type="HAMAP-Rule" id="MF_01384"/>
    </source>
</evidence>
<comment type="function">
    <text evidence="1">Required for maturation of urease via the functional incorporation of the urease nickel metallocenter.</text>
</comment>
<comment type="subunit">
    <text evidence="1">UreD, UreF and UreG form a complex that acts as a GTP-hydrolysis-dependent molecular chaperone, activating the urease apoprotein by helping to assemble the nickel containing metallocenter of UreC. The UreE protein probably delivers the nickel.</text>
</comment>
<comment type="subcellular location">
    <subcellularLocation>
        <location evidence="1">Cytoplasm</location>
    </subcellularLocation>
</comment>
<comment type="similarity">
    <text evidence="1">Belongs to the UreD family.</text>
</comment>